<protein>
    <recommendedName>
        <fullName evidence="1">Chorismate synthase</fullName>
        <shortName evidence="1">CS</shortName>
        <ecNumber evidence="1">4.2.3.5</ecNumber>
    </recommendedName>
    <alternativeName>
        <fullName evidence="1">5-enolpyruvylshikimate-3-phosphate phospholyase</fullName>
    </alternativeName>
</protein>
<name>AROC_CLAM3</name>
<comment type="function">
    <text evidence="1">Catalyzes the anti-1,4-elimination of the C-3 phosphate and the C-6 proR hydrogen from 5-enolpyruvylshikimate-3-phosphate (EPSP) to yield chorismate, which is the branch point compound that serves as the starting substrate for the three terminal pathways of aromatic amino acid biosynthesis. This reaction introduces a second double bond into the aromatic ring system.</text>
</comment>
<comment type="catalytic activity">
    <reaction evidence="1">
        <text>5-O-(1-carboxyvinyl)-3-phosphoshikimate = chorismate + phosphate</text>
        <dbReference type="Rhea" id="RHEA:21020"/>
        <dbReference type="ChEBI" id="CHEBI:29748"/>
        <dbReference type="ChEBI" id="CHEBI:43474"/>
        <dbReference type="ChEBI" id="CHEBI:57701"/>
        <dbReference type="EC" id="4.2.3.5"/>
    </reaction>
</comment>
<comment type="cofactor">
    <cofactor evidence="1">
        <name>FMNH2</name>
        <dbReference type="ChEBI" id="CHEBI:57618"/>
    </cofactor>
    <text evidence="1">Reduced FMN (FMNH(2)).</text>
</comment>
<comment type="pathway">
    <text evidence="1">Metabolic intermediate biosynthesis; chorismate biosynthesis; chorismate from D-erythrose 4-phosphate and phosphoenolpyruvate: step 7/7.</text>
</comment>
<comment type="subunit">
    <text evidence="1">Homotetramer.</text>
</comment>
<comment type="similarity">
    <text evidence="1">Belongs to the chorismate synthase family.</text>
</comment>
<sequence>MLRWLTAGESHGPELIAVLEGLPAGVPVSLDGIRADLARRKLGYGRGARMAFEQDELSLSTGVVHGRTLGSPIAVRIGNTEWPKWVDIMSPEPVDPEKLQGARAAALTRPRPGHADLVGMQKYDFDEARPVLERASARETAARVALGAVARAFLAELGITLVSHTLSIGPVRVPEGAPLPTPADVDALDADPLRCFHPETSARMVAEVDDTKSSGDTVGGVVEVLAYDLPPGLGSHVHWDRRLDSKLAAALMGIQAIKGVEVGDGFLTTTRRGSEAHDELFSTDAGIGRSTDRAGGTEGGMSTGTVLRVRAGMKPIATVPRALRTIDTATGGAAPANHQRSDVCAVPAAGVVAEAMVALTLADAVLEKFGGDSVGETLRNLRGYLDAIPEGRRTGADLVDEADAAPPAAPEA</sequence>
<gene>
    <name evidence="1" type="primary">aroC</name>
    <name type="ordered locus">CMM_1798</name>
</gene>
<dbReference type="EC" id="4.2.3.5" evidence="1"/>
<dbReference type="EMBL" id="AM711867">
    <property type="protein sequence ID" value="CAN01854.1"/>
    <property type="molecule type" value="Genomic_DNA"/>
</dbReference>
<dbReference type="RefSeq" id="WP_012038486.1">
    <property type="nucleotide sequence ID" value="NC_009480.1"/>
</dbReference>
<dbReference type="SMR" id="A5CRZ1"/>
<dbReference type="GeneID" id="92947785"/>
<dbReference type="KEGG" id="cmi:CMM_1798"/>
<dbReference type="eggNOG" id="COG0082">
    <property type="taxonomic scope" value="Bacteria"/>
</dbReference>
<dbReference type="HOGENOM" id="CLU_034547_2_0_11"/>
<dbReference type="OrthoDB" id="9771806at2"/>
<dbReference type="UniPathway" id="UPA00053">
    <property type="reaction ID" value="UER00090"/>
</dbReference>
<dbReference type="Proteomes" id="UP000001564">
    <property type="component" value="Chromosome"/>
</dbReference>
<dbReference type="GO" id="GO:0005829">
    <property type="term" value="C:cytosol"/>
    <property type="evidence" value="ECO:0007669"/>
    <property type="project" value="TreeGrafter"/>
</dbReference>
<dbReference type="GO" id="GO:0004107">
    <property type="term" value="F:chorismate synthase activity"/>
    <property type="evidence" value="ECO:0007669"/>
    <property type="project" value="UniProtKB-UniRule"/>
</dbReference>
<dbReference type="GO" id="GO:0010181">
    <property type="term" value="F:FMN binding"/>
    <property type="evidence" value="ECO:0007669"/>
    <property type="project" value="TreeGrafter"/>
</dbReference>
<dbReference type="GO" id="GO:0008652">
    <property type="term" value="P:amino acid biosynthetic process"/>
    <property type="evidence" value="ECO:0007669"/>
    <property type="project" value="UniProtKB-KW"/>
</dbReference>
<dbReference type="GO" id="GO:0009073">
    <property type="term" value="P:aromatic amino acid family biosynthetic process"/>
    <property type="evidence" value="ECO:0007669"/>
    <property type="project" value="UniProtKB-KW"/>
</dbReference>
<dbReference type="GO" id="GO:0009423">
    <property type="term" value="P:chorismate biosynthetic process"/>
    <property type="evidence" value="ECO:0007669"/>
    <property type="project" value="UniProtKB-UniRule"/>
</dbReference>
<dbReference type="CDD" id="cd07304">
    <property type="entry name" value="Chorismate_synthase"/>
    <property type="match status" value="1"/>
</dbReference>
<dbReference type="FunFam" id="3.60.150.10:FF:000002">
    <property type="entry name" value="Chorismate synthase"/>
    <property type="match status" value="1"/>
</dbReference>
<dbReference type="Gene3D" id="3.60.150.10">
    <property type="entry name" value="Chorismate synthase AroC"/>
    <property type="match status" value="1"/>
</dbReference>
<dbReference type="HAMAP" id="MF_00300">
    <property type="entry name" value="Chorismate_synth"/>
    <property type="match status" value="1"/>
</dbReference>
<dbReference type="InterPro" id="IPR000453">
    <property type="entry name" value="Chorismate_synth"/>
</dbReference>
<dbReference type="InterPro" id="IPR035904">
    <property type="entry name" value="Chorismate_synth_AroC_sf"/>
</dbReference>
<dbReference type="InterPro" id="IPR020541">
    <property type="entry name" value="Chorismate_synthase_CS"/>
</dbReference>
<dbReference type="NCBIfam" id="TIGR00033">
    <property type="entry name" value="aroC"/>
    <property type="match status" value="1"/>
</dbReference>
<dbReference type="NCBIfam" id="NF003793">
    <property type="entry name" value="PRK05382.1"/>
    <property type="match status" value="1"/>
</dbReference>
<dbReference type="PANTHER" id="PTHR21085">
    <property type="entry name" value="CHORISMATE SYNTHASE"/>
    <property type="match status" value="1"/>
</dbReference>
<dbReference type="PANTHER" id="PTHR21085:SF0">
    <property type="entry name" value="CHORISMATE SYNTHASE"/>
    <property type="match status" value="1"/>
</dbReference>
<dbReference type="Pfam" id="PF01264">
    <property type="entry name" value="Chorismate_synt"/>
    <property type="match status" value="1"/>
</dbReference>
<dbReference type="PIRSF" id="PIRSF001456">
    <property type="entry name" value="Chorismate_synth"/>
    <property type="match status" value="1"/>
</dbReference>
<dbReference type="SUPFAM" id="SSF103263">
    <property type="entry name" value="Chorismate synthase, AroC"/>
    <property type="match status" value="1"/>
</dbReference>
<dbReference type="PROSITE" id="PS00787">
    <property type="entry name" value="CHORISMATE_SYNTHASE_1"/>
    <property type="match status" value="1"/>
</dbReference>
<dbReference type="PROSITE" id="PS00788">
    <property type="entry name" value="CHORISMATE_SYNTHASE_2"/>
    <property type="match status" value="1"/>
</dbReference>
<dbReference type="PROSITE" id="PS00789">
    <property type="entry name" value="CHORISMATE_SYNTHASE_3"/>
    <property type="match status" value="1"/>
</dbReference>
<accession>A5CRZ1</accession>
<feature type="chain" id="PRO_0000322397" description="Chorismate synthase">
    <location>
        <begin position="1"/>
        <end position="412"/>
    </location>
</feature>
<feature type="binding site" evidence="1">
    <location>
        <position position="40"/>
    </location>
    <ligand>
        <name>NADP(+)</name>
        <dbReference type="ChEBI" id="CHEBI:58349"/>
    </ligand>
</feature>
<feature type="binding site" evidence="1">
    <location>
        <position position="46"/>
    </location>
    <ligand>
        <name>NADP(+)</name>
        <dbReference type="ChEBI" id="CHEBI:58349"/>
    </ligand>
</feature>
<feature type="binding site" evidence="1">
    <location>
        <begin position="134"/>
        <end position="136"/>
    </location>
    <ligand>
        <name>FMN</name>
        <dbReference type="ChEBI" id="CHEBI:58210"/>
    </ligand>
</feature>
<feature type="binding site" evidence="1">
    <location>
        <begin position="255"/>
        <end position="256"/>
    </location>
    <ligand>
        <name>FMN</name>
        <dbReference type="ChEBI" id="CHEBI:58210"/>
    </ligand>
</feature>
<feature type="binding site" evidence="1">
    <location>
        <position position="299"/>
    </location>
    <ligand>
        <name>FMN</name>
        <dbReference type="ChEBI" id="CHEBI:58210"/>
    </ligand>
</feature>
<feature type="binding site" evidence="1">
    <location>
        <begin position="314"/>
        <end position="318"/>
    </location>
    <ligand>
        <name>FMN</name>
        <dbReference type="ChEBI" id="CHEBI:58210"/>
    </ligand>
</feature>
<feature type="binding site" evidence="1">
    <location>
        <position position="340"/>
    </location>
    <ligand>
        <name>FMN</name>
        <dbReference type="ChEBI" id="CHEBI:58210"/>
    </ligand>
</feature>
<reference key="1">
    <citation type="journal article" date="2008" name="J. Bacteriol.">
        <title>The genome sequence of the tomato-pathogenic actinomycete Clavibacter michiganensis subsp. michiganensis NCPPB382 reveals a large island involved in pathogenicity.</title>
        <authorList>
            <person name="Gartemann K.-H."/>
            <person name="Abt B."/>
            <person name="Bekel T."/>
            <person name="Burger A."/>
            <person name="Engemann J."/>
            <person name="Fluegel M."/>
            <person name="Gaigalat L."/>
            <person name="Goesmann A."/>
            <person name="Graefen I."/>
            <person name="Kalinowski J."/>
            <person name="Kaup O."/>
            <person name="Kirchner O."/>
            <person name="Krause L."/>
            <person name="Linke B."/>
            <person name="McHardy A."/>
            <person name="Meyer F."/>
            <person name="Pohle S."/>
            <person name="Rueckert C."/>
            <person name="Schneiker S."/>
            <person name="Zellermann E.-M."/>
            <person name="Puehler A."/>
            <person name="Eichenlaub R."/>
            <person name="Kaiser O."/>
            <person name="Bartels D."/>
        </authorList>
    </citation>
    <scope>NUCLEOTIDE SEQUENCE [LARGE SCALE GENOMIC DNA]</scope>
    <source>
        <strain>NCPPB 382</strain>
    </source>
</reference>
<evidence type="ECO:0000255" key="1">
    <source>
        <dbReference type="HAMAP-Rule" id="MF_00300"/>
    </source>
</evidence>
<organism>
    <name type="scientific">Clavibacter michiganensis subsp. michiganensis (strain NCPPB 382)</name>
    <dbReference type="NCBI Taxonomy" id="443906"/>
    <lineage>
        <taxon>Bacteria</taxon>
        <taxon>Bacillati</taxon>
        <taxon>Actinomycetota</taxon>
        <taxon>Actinomycetes</taxon>
        <taxon>Micrococcales</taxon>
        <taxon>Microbacteriaceae</taxon>
        <taxon>Clavibacter</taxon>
    </lineage>
</organism>
<proteinExistence type="inferred from homology"/>
<keyword id="KW-0028">Amino-acid biosynthesis</keyword>
<keyword id="KW-0057">Aromatic amino acid biosynthesis</keyword>
<keyword id="KW-0274">FAD</keyword>
<keyword id="KW-0285">Flavoprotein</keyword>
<keyword id="KW-0288">FMN</keyword>
<keyword id="KW-0456">Lyase</keyword>
<keyword id="KW-0521">NADP</keyword>